<reference key="1">
    <citation type="journal article" date="2005" name="Science">
        <title>The transcriptional landscape of the mammalian genome.</title>
        <authorList>
            <person name="Carninci P."/>
            <person name="Kasukawa T."/>
            <person name="Katayama S."/>
            <person name="Gough J."/>
            <person name="Frith M.C."/>
            <person name="Maeda N."/>
            <person name="Oyama R."/>
            <person name="Ravasi T."/>
            <person name="Lenhard B."/>
            <person name="Wells C."/>
            <person name="Kodzius R."/>
            <person name="Shimokawa K."/>
            <person name="Bajic V.B."/>
            <person name="Brenner S.E."/>
            <person name="Batalov S."/>
            <person name="Forrest A.R."/>
            <person name="Zavolan M."/>
            <person name="Davis M.J."/>
            <person name="Wilming L.G."/>
            <person name="Aidinis V."/>
            <person name="Allen J.E."/>
            <person name="Ambesi-Impiombato A."/>
            <person name="Apweiler R."/>
            <person name="Aturaliya R.N."/>
            <person name="Bailey T.L."/>
            <person name="Bansal M."/>
            <person name="Baxter L."/>
            <person name="Beisel K.W."/>
            <person name="Bersano T."/>
            <person name="Bono H."/>
            <person name="Chalk A.M."/>
            <person name="Chiu K.P."/>
            <person name="Choudhary V."/>
            <person name="Christoffels A."/>
            <person name="Clutterbuck D.R."/>
            <person name="Crowe M.L."/>
            <person name="Dalla E."/>
            <person name="Dalrymple B.P."/>
            <person name="de Bono B."/>
            <person name="Della Gatta G."/>
            <person name="di Bernardo D."/>
            <person name="Down T."/>
            <person name="Engstrom P."/>
            <person name="Fagiolini M."/>
            <person name="Faulkner G."/>
            <person name="Fletcher C.F."/>
            <person name="Fukushima T."/>
            <person name="Furuno M."/>
            <person name="Futaki S."/>
            <person name="Gariboldi M."/>
            <person name="Georgii-Hemming P."/>
            <person name="Gingeras T.R."/>
            <person name="Gojobori T."/>
            <person name="Green R.E."/>
            <person name="Gustincich S."/>
            <person name="Harbers M."/>
            <person name="Hayashi Y."/>
            <person name="Hensch T.K."/>
            <person name="Hirokawa N."/>
            <person name="Hill D."/>
            <person name="Huminiecki L."/>
            <person name="Iacono M."/>
            <person name="Ikeo K."/>
            <person name="Iwama A."/>
            <person name="Ishikawa T."/>
            <person name="Jakt M."/>
            <person name="Kanapin A."/>
            <person name="Katoh M."/>
            <person name="Kawasawa Y."/>
            <person name="Kelso J."/>
            <person name="Kitamura H."/>
            <person name="Kitano H."/>
            <person name="Kollias G."/>
            <person name="Krishnan S.P."/>
            <person name="Kruger A."/>
            <person name="Kummerfeld S.K."/>
            <person name="Kurochkin I.V."/>
            <person name="Lareau L.F."/>
            <person name="Lazarevic D."/>
            <person name="Lipovich L."/>
            <person name="Liu J."/>
            <person name="Liuni S."/>
            <person name="McWilliam S."/>
            <person name="Madan Babu M."/>
            <person name="Madera M."/>
            <person name="Marchionni L."/>
            <person name="Matsuda H."/>
            <person name="Matsuzawa S."/>
            <person name="Miki H."/>
            <person name="Mignone F."/>
            <person name="Miyake S."/>
            <person name="Morris K."/>
            <person name="Mottagui-Tabar S."/>
            <person name="Mulder N."/>
            <person name="Nakano N."/>
            <person name="Nakauchi H."/>
            <person name="Ng P."/>
            <person name="Nilsson R."/>
            <person name="Nishiguchi S."/>
            <person name="Nishikawa S."/>
            <person name="Nori F."/>
            <person name="Ohara O."/>
            <person name="Okazaki Y."/>
            <person name="Orlando V."/>
            <person name="Pang K.C."/>
            <person name="Pavan W.J."/>
            <person name="Pavesi G."/>
            <person name="Pesole G."/>
            <person name="Petrovsky N."/>
            <person name="Piazza S."/>
            <person name="Reed J."/>
            <person name="Reid J.F."/>
            <person name="Ring B.Z."/>
            <person name="Ringwald M."/>
            <person name="Rost B."/>
            <person name="Ruan Y."/>
            <person name="Salzberg S.L."/>
            <person name="Sandelin A."/>
            <person name="Schneider C."/>
            <person name="Schoenbach C."/>
            <person name="Sekiguchi K."/>
            <person name="Semple C.A."/>
            <person name="Seno S."/>
            <person name="Sessa L."/>
            <person name="Sheng Y."/>
            <person name="Shibata Y."/>
            <person name="Shimada H."/>
            <person name="Shimada K."/>
            <person name="Silva D."/>
            <person name="Sinclair B."/>
            <person name="Sperling S."/>
            <person name="Stupka E."/>
            <person name="Sugiura K."/>
            <person name="Sultana R."/>
            <person name="Takenaka Y."/>
            <person name="Taki K."/>
            <person name="Tammoja K."/>
            <person name="Tan S.L."/>
            <person name="Tang S."/>
            <person name="Taylor M.S."/>
            <person name="Tegner J."/>
            <person name="Teichmann S.A."/>
            <person name="Ueda H.R."/>
            <person name="van Nimwegen E."/>
            <person name="Verardo R."/>
            <person name="Wei C.L."/>
            <person name="Yagi K."/>
            <person name="Yamanishi H."/>
            <person name="Zabarovsky E."/>
            <person name="Zhu S."/>
            <person name="Zimmer A."/>
            <person name="Hide W."/>
            <person name="Bult C."/>
            <person name="Grimmond S.M."/>
            <person name="Teasdale R.D."/>
            <person name="Liu E.T."/>
            <person name="Brusic V."/>
            <person name="Quackenbush J."/>
            <person name="Wahlestedt C."/>
            <person name="Mattick J.S."/>
            <person name="Hume D.A."/>
            <person name="Kai C."/>
            <person name="Sasaki D."/>
            <person name="Tomaru Y."/>
            <person name="Fukuda S."/>
            <person name="Kanamori-Katayama M."/>
            <person name="Suzuki M."/>
            <person name="Aoki J."/>
            <person name="Arakawa T."/>
            <person name="Iida J."/>
            <person name="Imamura K."/>
            <person name="Itoh M."/>
            <person name="Kato T."/>
            <person name="Kawaji H."/>
            <person name="Kawagashira N."/>
            <person name="Kawashima T."/>
            <person name="Kojima M."/>
            <person name="Kondo S."/>
            <person name="Konno H."/>
            <person name="Nakano K."/>
            <person name="Ninomiya N."/>
            <person name="Nishio T."/>
            <person name="Okada M."/>
            <person name="Plessy C."/>
            <person name="Shibata K."/>
            <person name="Shiraki T."/>
            <person name="Suzuki S."/>
            <person name="Tagami M."/>
            <person name="Waki K."/>
            <person name="Watahiki A."/>
            <person name="Okamura-Oho Y."/>
            <person name="Suzuki H."/>
            <person name="Kawai J."/>
            <person name="Hayashizaki Y."/>
        </authorList>
    </citation>
    <scope>NUCLEOTIDE SEQUENCE [LARGE SCALE MRNA]</scope>
    <source>
        <strain>C57BL/6J</strain>
        <tissue>Aorta</tissue>
        <tissue>Mammary gland</tissue>
        <tissue>Testis</tissue>
        <tissue>Vein</tissue>
    </source>
</reference>
<reference key="2">
    <citation type="journal article" date="2004" name="Genome Res.">
        <title>The status, quality, and expansion of the NIH full-length cDNA project: the Mammalian Gene Collection (MGC).</title>
        <authorList>
            <consortium name="The MGC Project Team"/>
        </authorList>
    </citation>
    <scope>NUCLEOTIDE SEQUENCE [LARGE SCALE MRNA]</scope>
    <source>
        <strain>Czech II</strain>
        <strain>FVB/N</strain>
        <tissue>Mammary tumor</tissue>
    </source>
</reference>
<reference key="3">
    <citation type="journal article" date="1998" name="Proc. Natl. Acad. Sci. U.S.A.">
        <title>WW domain-mediated interactions reveal a spliceosome-associated protein that binds a third class of proline-rich motif: the proline glycine and methionine-rich motif.</title>
        <authorList>
            <person name="Bedford M.T."/>
            <person name="Reed R."/>
            <person name="Leder P."/>
        </authorList>
    </citation>
    <scope>NUCLEOTIDE SEQUENCE [MRNA] OF 213-641</scope>
</reference>
<reference key="4">
    <citation type="journal article" date="2004" name="Biochem. J.">
        <title>SIPP1, a novel pre-mRNA splicing factor and interactor of protein phosphatase-1.</title>
        <authorList>
            <person name="Llorian M."/>
            <person name="Beullens M."/>
            <person name="Andres I."/>
            <person name="Ortiz J.M."/>
            <person name="Bollen M."/>
        </authorList>
    </citation>
    <scope>FUNCTION</scope>
    <scope>INTERACTION WITH PPP1CA; PPP1CB AND PPP1CC</scope>
    <scope>MUTAGENESIS OF VAL-219; PHE-221; VAL-308 AND PHE-310</scope>
    <scope>TISSUE SPECIFICITY</scope>
    <scope>SUBCELLULAR LOCATION</scope>
</reference>
<reference key="5">
    <citation type="journal article" date="2005" name="J. Biol. Chem.">
        <title>Nucleocytoplasmic shuttling of the splicing factor SIPP1.</title>
        <authorList>
            <person name="Llorian M."/>
            <person name="Beullens M."/>
            <person name="Lesage B."/>
            <person name="Nicolaescu E."/>
            <person name="Beke L."/>
            <person name="Landuyt W."/>
            <person name="Ortiz J.M."/>
            <person name="Bollen M."/>
        </authorList>
    </citation>
    <scope>FUNCTION</scope>
    <scope>SUBCELLULAR LOCATION</scope>
</reference>
<reference key="6">
    <citation type="journal article" date="2007" name="Proc. Natl. Acad. Sci. U.S.A.">
        <title>Large-scale phosphorylation analysis of mouse liver.</title>
        <authorList>
            <person name="Villen J."/>
            <person name="Beausoleil S.A."/>
            <person name="Gerber S.A."/>
            <person name="Gygi S.P."/>
        </authorList>
    </citation>
    <scope>PHOSPHORYLATION [LARGE SCALE ANALYSIS] AT SER-353</scope>
    <scope>IDENTIFICATION BY MASS SPECTROMETRY [LARGE SCALE ANALYSIS]</scope>
    <source>
        <tissue>Liver</tissue>
    </source>
</reference>
<reference key="7">
    <citation type="journal article" date="2010" name="Cell">
        <title>A tissue-specific atlas of mouse protein phosphorylation and expression.</title>
        <authorList>
            <person name="Huttlin E.L."/>
            <person name="Jedrychowski M.P."/>
            <person name="Elias J.E."/>
            <person name="Goswami T."/>
            <person name="Rad R."/>
            <person name="Beausoleil S.A."/>
            <person name="Villen J."/>
            <person name="Haas W."/>
            <person name="Sowa M.E."/>
            <person name="Gygi S.P."/>
        </authorList>
    </citation>
    <scope>PHOSPHORYLATION [LARGE SCALE ANALYSIS] AT SER-181; TYR-236; SER-237; SER-353; SER-361 AND SER-364</scope>
    <scope>IDENTIFICATION BY MASS SPECTROMETRY [LARGE SCALE ANALYSIS]</scope>
    <source>
        <tissue>Brain</tissue>
        <tissue>Heart</tissue>
        <tissue>Kidney</tissue>
        <tissue>Liver</tissue>
        <tissue>Lung</tissue>
        <tissue>Pancreas</tissue>
        <tissue>Spleen</tissue>
        <tissue>Testis</tissue>
    </source>
</reference>
<reference key="8">
    <citation type="journal article" date="2013" name="Mol. Cell">
        <title>SIRT5-mediated lysine desuccinylation impacts diverse metabolic pathways.</title>
        <authorList>
            <person name="Park J."/>
            <person name="Chen Y."/>
            <person name="Tishkoff D.X."/>
            <person name="Peng C."/>
            <person name="Tan M."/>
            <person name="Dai L."/>
            <person name="Xie Z."/>
            <person name="Zhang Y."/>
            <person name="Zwaans B.M."/>
            <person name="Skinner M.E."/>
            <person name="Lombard D.B."/>
            <person name="Zhao Y."/>
        </authorList>
    </citation>
    <scope>ACETYLATION [LARGE SCALE ANALYSIS] AT LYS-13 AND LYS-565</scope>
    <scope>IDENTIFICATION BY MASS SPECTROMETRY [LARGE SCALE ANALYSIS]</scope>
    <source>
        <tissue>Embryonic fibroblast</tissue>
    </source>
</reference>
<reference key="9">
    <citation type="journal article" date="2020" name="Hum. Mol. Genet.">
        <title>Heterozygous loss of WBP11 function causes multiple congenital defects in humans and mice.</title>
        <authorList>
            <person name="Martin E.M.M.A."/>
            <person name="Enriquez A."/>
            <person name="Sparrow D.B."/>
            <person name="Humphreys D.T."/>
            <person name="McInerney-Leo A.M."/>
            <person name="Leo P.J."/>
            <person name="Duncan E.L."/>
            <person name="Iyer K.R."/>
            <person name="Greasby J.A."/>
            <person name="Ip E."/>
            <person name="Giannoulatou E."/>
            <person name="Sheng D."/>
            <person name="Wohler E."/>
            <person name="Dimartino C."/>
            <person name="Amiel J."/>
            <person name="Capri Y."/>
            <person name="Lehalle D."/>
            <person name="Mory A."/>
            <person name="Wilnai Y."/>
            <person name="Lebenthal Y."/>
            <person name="Gharavi A.G."/>
            <person name="Krzemien G.G."/>
            <person name="Miklaszewska M."/>
            <person name="Steiner R.D."/>
            <person name="Raggio C."/>
            <person name="Blank R."/>
            <person name="Baris Feldman H."/>
            <person name="Milo Rasouly H."/>
            <person name="Sobreira N.L.M."/>
            <person name="Jobling R."/>
            <person name="Gordon C.T."/>
            <person name="Giampietro P.F."/>
            <person name="Dunwoodie S.L."/>
            <person name="Chapman G."/>
        </authorList>
    </citation>
    <scope>DISRUPTION PHENOTYPE</scope>
</reference>
<protein>
    <recommendedName>
        <fullName>WW domain-binding protein 11</fullName>
        <shortName>WBP-11</shortName>
    </recommendedName>
    <alternativeName>
        <fullName>Splicing factor that interacts with PQBP-1 and PP1</fullName>
    </alternativeName>
</protein>
<proteinExistence type="evidence at protein level"/>
<evidence type="ECO:0000250" key="1"/>
<evidence type="ECO:0000250" key="2">
    <source>
        <dbReference type="UniProtKB" id="Q9Y2W2"/>
    </source>
</evidence>
<evidence type="ECO:0000255" key="3"/>
<evidence type="ECO:0000256" key="4">
    <source>
        <dbReference type="SAM" id="MobiDB-lite"/>
    </source>
</evidence>
<evidence type="ECO:0000269" key="5">
    <source>
    </source>
</evidence>
<evidence type="ECO:0000269" key="6">
    <source>
    </source>
</evidence>
<evidence type="ECO:0000269" key="7">
    <source>
    </source>
</evidence>
<evidence type="ECO:0000305" key="8"/>
<evidence type="ECO:0007744" key="9">
    <source>
    </source>
</evidence>
<evidence type="ECO:0007744" key="10">
    <source>
    </source>
</evidence>
<evidence type="ECO:0007744" key="11">
    <source>
    </source>
</evidence>
<sequence>MGRRSTSSTKSGKFMNPTDQARKEARKRELKKNKKQRMMVRAAVLKMKDPKQIIRDMEKLDEMEFNPVQQPQLNEKVLKDKRKKLRETFERILRLYEKENPDIYKELRKLEVEYEQKRAQLSQYFDAVKNAQHVEVESIPLPDMPHAPSNILIQDIPLPGAQPPSILKKTSAYGPPARAVSILPLLGHGVPRLPPGRKPPGPPPGPPPPQVLQMYGRKVGFALDLPPRRRDEDMLYSPELAQRGHDDDMSSTSEDDGYPEDMDQDKHDDSTEDSDTDRSDAESDGDEFGHREDSERDNTEEKKSGLSVRFADMPGKSRKKKKNMKELTPLQAMMLRMAGQEIPEEGREVEEFSEEEDADDSDDSEAEKQSQKQHKDDGHSDSTAAASSQQQAPPQSAPASQIQAPPMPGPPPLGPPPAPPLRPPGPPTGLPPGPPPGAPPFLRPPGMPGIRGPLPRLLPPGPPPGRPPGPPPGPPPGLPPGPPPRGPPPRLPPPAPPGIPPPRPGMMRPPLVPPLGPAPPGLFPPAPLPNPGVLSAPPSLIQRPKADDASAATIEKKATATISAKPQITNPKAEVTRFVPTALRVRRENKGATAVPQRRSEDDSAVPVAKAAPRSGPSVAVSVQTKDDVYEAFMKEMEGLL</sequence>
<accession>Q923D5</accession>
<accession>O88539</accession>
<accession>Q3UMD8</accession>
<accession>Q8VDI0</accession>
<organism>
    <name type="scientific">Mus musculus</name>
    <name type="common">Mouse</name>
    <dbReference type="NCBI Taxonomy" id="10090"/>
    <lineage>
        <taxon>Eukaryota</taxon>
        <taxon>Metazoa</taxon>
        <taxon>Chordata</taxon>
        <taxon>Craniata</taxon>
        <taxon>Vertebrata</taxon>
        <taxon>Euteleostomi</taxon>
        <taxon>Mammalia</taxon>
        <taxon>Eutheria</taxon>
        <taxon>Euarchontoglires</taxon>
        <taxon>Glires</taxon>
        <taxon>Rodentia</taxon>
        <taxon>Myomorpha</taxon>
        <taxon>Muroidea</taxon>
        <taxon>Muridae</taxon>
        <taxon>Murinae</taxon>
        <taxon>Mus</taxon>
        <taxon>Mus</taxon>
    </lineage>
</organism>
<keyword id="KW-0007">Acetylation</keyword>
<keyword id="KW-0175">Coiled coil</keyword>
<keyword id="KW-0963">Cytoplasm</keyword>
<keyword id="KW-1017">Isopeptide bond</keyword>
<keyword id="KW-0488">Methylation</keyword>
<keyword id="KW-0507">mRNA processing</keyword>
<keyword id="KW-0508">mRNA splicing</keyword>
<keyword id="KW-0539">Nucleus</keyword>
<keyword id="KW-0597">Phosphoprotein</keyword>
<keyword id="KW-1185">Reference proteome</keyword>
<keyword id="KW-0698">rRNA processing</keyword>
<keyword id="KW-0832">Ubl conjugation</keyword>
<feature type="chain" id="PRO_0000065946" description="WW domain-binding protein 11">
    <location>
        <begin position="1"/>
        <end position="641"/>
    </location>
</feature>
<feature type="region of interest" description="Required for nuclear import">
    <location>
        <begin position="1"/>
        <end position="45"/>
    </location>
</feature>
<feature type="region of interest" description="Disordered" evidence="4">
    <location>
        <begin position="1"/>
        <end position="37"/>
    </location>
</feature>
<feature type="region of interest" description="Disordered" evidence="4">
    <location>
        <begin position="188"/>
        <end position="213"/>
    </location>
</feature>
<feature type="region of interest" description="Interaction with PP1">
    <location>
        <begin position="217"/>
        <end position="221"/>
    </location>
</feature>
<feature type="region of interest" description="Disordered" evidence="4">
    <location>
        <begin position="236"/>
        <end position="550"/>
    </location>
</feature>
<feature type="region of interest" description="Interaction with PP1">
    <location>
        <begin position="306"/>
        <end position="310"/>
    </location>
</feature>
<feature type="region of interest" description="Disordered" evidence="4">
    <location>
        <begin position="588"/>
        <end position="620"/>
    </location>
</feature>
<feature type="region of interest" description="Required for nuclear export">
    <location>
        <begin position="633"/>
        <end position="641"/>
    </location>
</feature>
<feature type="coiled-coil region" evidence="3">
    <location>
        <begin position="75"/>
        <end position="133"/>
    </location>
</feature>
<feature type="short sequence motif" description="PGR">
    <location>
        <begin position="455"/>
        <end position="466"/>
    </location>
</feature>
<feature type="compositionally biased region" description="Polar residues" evidence="4">
    <location>
        <begin position="1"/>
        <end position="11"/>
    </location>
</feature>
<feature type="compositionally biased region" description="Basic residues" evidence="4">
    <location>
        <begin position="28"/>
        <end position="37"/>
    </location>
</feature>
<feature type="compositionally biased region" description="Pro residues" evidence="4">
    <location>
        <begin position="192"/>
        <end position="210"/>
    </location>
</feature>
<feature type="compositionally biased region" description="Acidic residues" evidence="4">
    <location>
        <begin position="253"/>
        <end position="263"/>
    </location>
</feature>
<feature type="compositionally biased region" description="Basic and acidic residues" evidence="4">
    <location>
        <begin position="276"/>
        <end position="304"/>
    </location>
</feature>
<feature type="compositionally biased region" description="Acidic residues" evidence="4">
    <location>
        <begin position="351"/>
        <end position="365"/>
    </location>
</feature>
<feature type="compositionally biased region" description="Basic and acidic residues" evidence="4">
    <location>
        <begin position="366"/>
        <end position="380"/>
    </location>
</feature>
<feature type="compositionally biased region" description="Low complexity" evidence="4">
    <location>
        <begin position="381"/>
        <end position="404"/>
    </location>
</feature>
<feature type="compositionally biased region" description="Pro residues" evidence="4">
    <location>
        <begin position="405"/>
        <end position="447"/>
    </location>
</feature>
<feature type="compositionally biased region" description="Pro residues" evidence="4">
    <location>
        <begin position="456"/>
        <end position="504"/>
    </location>
</feature>
<feature type="compositionally biased region" description="Pro residues" evidence="4">
    <location>
        <begin position="510"/>
        <end position="530"/>
    </location>
</feature>
<feature type="modified residue" description="N6-acetyllysine" evidence="11">
    <location>
        <position position="13"/>
    </location>
</feature>
<feature type="modified residue" description="Phosphoserine" evidence="10">
    <location>
        <position position="181"/>
    </location>
</feature>
<feature type="modified residue" description="Omega-N-methylarginine" evidence="2">
    <location>
        <position position="192"/>
    </location>
</feature>
<feature type="modified residue" description="Phosphotyrosine" evidence="10">
    <location>
        <position position="236"/>
    </location>
</feature>
<feature type="modified residue" description="Phosphoserine" evidence="10">
    <location>
        <position position="237"/>
    </location>
</feature>
<feature type="modified residue" description="Phosphoserine" evidence="2">
    <location>
        <position position="279"/>
    </location>
</feature>
<feature type="modified residue" description="Phosphoserine" evidence="2">
    <location>
        <position position="283"/>
    </location>
</feature>
<feature type="modified residue" description="Phosphoserine" evidence="9 10">
    <location>
        <position position="353"/>
    </location>
</feature>
<feature type="modified residue" description="Phosphoserine" evidence="10">
    <location>
        <position position="361"/>
    </location>
</feature>
<feature type="modified residue" description="Phosphoserine" evidence="10">
    <location>
        <position position="364"/>
    </location>
</feature>
<feature type="modified residue" description="N6-acetyllysine" evidence="11">
    <location>
        <position position="565"/>
    </location>
</feature>
<feature type="modified residue" description="Phosphoserine" evidence="2">
    <location>
        <position position="600"/>
    </location>
</feature>
<feature type="cross-link" description="Glycyl lysine isopeptide (Lys-Gly) (interchain with G-Cter in SUMO2)" evidence="2">
    <location>
        <position position="557"/>
    </location>
</feature>
<feature type="cross-link" description="Glycyl lysine isopeptide (Lys-Gly) (interchain with G-Cter in SUMO2)" evidence="2">
    <location>
        <position position="572"/>
    </location>
</feature>
<feature type="mutagenesis site" description="Impairs interaction with PP1; when associated with A-221." evidence="5">
    <original>V</original>
    <variation>A</variation>
    <location>
        <position position="219"/>
    </location>
</feature>
<feature type="mutagenesis site" description="Impairs interaction with PP1; when associated with A-219." evidence="5">
    <original>F</original>
    <variation>A</variation>
    <location>
        <position position="221"/>
    </location>
</feature>
<feature type="mutagenesis site" description="Impairs interaction with PP1; when associated with A-310." evidence="5">
    <original>V</original>
    <variation>A</variation>
    <location>
        <position position="308"/>
    </location>
</feature>
<feature type="mutagenesis site" description="Impairs interaction with PP1; when associated with A-308." evidence="5">
    <original>F</original>
    <variation>A</variation>
    <location>
        <position position="310"/>
    </location>
</feature>
<feature type="sequence conflict" description="In Ref. 2; AAH06600 and 3; AAC34812." evidence="8" ref="2 3">
    <original>G</original>
    <variation>A</variation>
    <location>
        <position position="378"/>
    </location>
</feature>
<comment type="function">
    <text evidence="5 6">Activates pre-mRNA splicing. May inhibit PP1 phosphatase activity.</text>
</comment>
<comment type="subunit">
    <text evidence="1 5">Interacts via the PGR motif with PQBP1 in the nucleus. Interacts with the WW domains of WBP4 (By similarity). Interacts with PPP1CA, PPP1CB and PPP1CC.</text>
</comment>
<comment type="subcellular location">
    <subcellularLocation>
        <location>Nucleus</location>
    </subcellularLocation>
    <subcellularLocation>
        <location>Cytoplasm</location>
    </subcellularLocation>
    <text>Predominantly located in the nucleus with granular heterogeneous distribution. Excluded from nucleoli in interphase cells, distributed throughout cytoplasm in dividing cells. Colocalized with SC35 and U2B in the nucleus. In the cytoplasm, associates with the intermediate filament protein vimentin.</text>
</comment>
<comment type="tissue specificity">
    <text evidence="5">Ubiquitously expressed, with highest levels in testis.</text>
</comment>
<comment type="disruption phenotype">
    <text evidence="7">Mutant embryos die prior to 8.5 dpc (PubMed:33276377). Heterozygous null mice are small and exhibit defects in axial skeleton, kidneys and esophagus (PubMed:33276377).</text>
</comment>
<comment type="sequence caution" evidence="8">
    <conflict type="frameshift">
        <sequence resource="EMBL-CDS" id="AAC34812"/>
    </conflict>
</comment>
<gene>
    <name type="primary">Wbp11</name>
    <name type="synonym">Sipp1</name>
</gene>
<dbReference type="EMBL" id="AK031678">
    <property type="protein sequence ID" value="BAC27508.1"/>
    <property type="molecule type" value="mRNA"/>
</dbReference>
<dbReference type="EMBL" id="AK041079">
    <property type="protein sequence ID" value="BAC30812.1"/>
    <property type="molecule type" value="mRNA"/>
</dbReference>
<dbReference type="EMBL" id="AK144968">
    <property type="protein sequence ID" value="BAE26160.1"/>
    <property type="molecule type" value="mRNA"/>
</dbReference>
<dbReference type="EMBL" id="BC006600">
    <property type="protein sequence ID" value="AAH06600.1"/>
    <property type="molecule type" value="mRNA"/>
</dbReference>
<dbReference type="EMBL" id="BC021823">
    <property type="protein sequence ID" value="AAH21823.1"/>
    <property type="molecule type" value="mRNA"/>
</dbReference>
<dbReference type="EMBL" id="AF071186">
    <property type="protein sequence ID" value="AAC34812.1"/>
    <property type="status" value="ALT_SEQ"/>
    <property type="molecule type" value="mRNA"/>
</dbReference>
<dbReference type="CCDS" id="CCDS20655.1"/>
<dbReference type="RefSeq" id="NP_068360.4">
    <property type="nucleotide sequence ID" value="NM_021714.4"/>
</dbReference>
<dbReference type="RefSeq" id="XP_017177182.1">
    <property type="nucleotide sequence ID" value="XM_017321693.1"/>
</dbReference>
<dbReference type="RefSeq" id="XP_030111382.1">
    <property type="nucleotide sequence ID" value="XM_030255522.1"/>
</dbReference>
<dbReference type="SMR" id="Q923D5"/>
<dbReference type="BioGRID" id="208550">
    <property type="interactions" value="16"/>
</dbReference>
<dbReference type="ELM" id="Q923D5"/>
<dbReference type="FunCoup" id="Q923D5">
    <property type="interactions" value="5854"/>
</dbReference>
<dbReference type="IntAct" id="Q923D5">
    <property type="interactions" value="12"/>
</dbReference>
<dbReference type="MINT" id="Q923D5"/>
<dbReference type="STRING" id="10090.ENSMUSP00000112213"/>
<dbReference type="GlyGen" id="Q923D5">
    <property type="glycosylation" value="1 site, 1 O-linked glycan (1 site)"/>
</dbReference>
<dbReference type="iPTMnet" id="Q923D5"/>
<dbReference type="PhosphoSitePlus" id="Q923D5"/>
<dbReference type="jPOST" id="Q923D5"/>
<dbReference type="PaxDb" id="10090-ENSMUSP00000112213"/>
<dbReference type="ProteomicsDB" id="297843"/>
<dbReference type="Pumba" id="Q923D5"/>
<dbReference type="DNASU" id="60321"/>
<dbReference type="Ensembl" id="ENSMUST00000116514.4">
    <property type="protein sequence ID" value="ENSMUSP00000112213.2"/>
    <property type="gene ID" value="ENSMUSG00000030216.13"/>
</dbReference>
<dbReference type="GeneID" id="60321"/>
<dbReference type="KEGG" id="mmu:60321"/>
<dbReference type="UCSC" id="uc009emf.2">
    <property type="organism name" value="mouse"/>
</dbReference>
<dbReference type="AGR" id="MGI:1891823"/>
<dbReference type="CTD" id="51729"/>
<dbReference type="MGI" id="MGI:1891823">
    <property type="gene designation" value="Wbp11"/>
</dbReference>
<dbReference type="VEuPathDB" id="HostDB:ENSMUSG00000030216"/>
<dbReference type="eggNOG" id="KOG4672">
    <property type="taxonomic scope" value="Eukaryota"/>
</dbReference>
<dbReference type="GeneTree" id="ENSGT01120000272561"/>
<dbReference type="HOGENOM" id="CLU_028337_1_0_1"/>
<dbReference type="InParanoid" id="Q923D5"/>
<dbReference type="OMA" id="FGMRMPP"/>
<dbReference type="OrthoDB" id="10067323at2759"/>
<dbReference type="PhylomeDB" id="Q923D5"/>
<dbReference type="TreeFam" id="TF323226"/>
<dbReference type="Reactome" id="R-MMU-72163">
    <property type="pathway name" value="mRNA Splicing - Major Pathway"/>
</dbReference>
<dbReference type="BioGRID-ORCS" id="60321">
    <property type="hits" value="28 hits in 79 CRISPR screens"/>
</dbReference>
<dbReference type="ChiTaRS" id="Wbp11">
    <property type="organism name" value="mouse"/>
</dbReference>
<dbReference type="PRO" id="PR:Q923D5"/>
<dbReference type="Proteomes" id="UP000000589">
    <property type="component" value="Chromosome 6"/>
</dbReference>
<dbReference type="RNAct" id="Q923D5">
    <property type="molecule type" value="protein"/>
</dbReference>
<dbReference type="Bgee" id="ENSMUSG00000030216">
    <property type="expression patterns" value="Expressed in embryonic post-anal tail and 263 other cell types or tissues"/>
</dbReference>
<dbReference type="ExpressionAtlas" id="Q923D5">
    <property type="expression patterns" value="baseline and differential"/>
</dbReference>
<dbReference type="GO" id="GO:0005737">
    <property type="term" value="C:cytoplasm"/>
    <property type="evidence" value="ECO:0000314"/>
    <property type="project" value="MGI"/>
</dbReference>
<dbReference type="GO" id="GO:0016607">
    <property type="term" value="C:nuclear speck"/>
    <property type="evidence" value="ECO:0000314"/>
    <property type="project" value="MGI"/>
</dbReference>
<dbReference type="GO" id="GO:0005634">
    <property type="term" value="C:nucleus"/>
    <property type="evidence" value="ECO:0000314"/>
    <property type="project" value="MGI"/>
</dbReference>
<dbReference type="GO" id="GO:0019888">
    <property type="term" value="F:protein phosphatase regulator activity"/>
    <property type="evidence" value="ECO:0000314"/>
    <property type="project" value="MGI"/>
</dbReference>
<dbReference type="GO" id="GO:0006397">
    <property type="term" value="P:mRNA processing"/>
    <property type="evidence" value="ECO:0007669"/>
    <property type="project" value="UniProtKB-KW"/>
</dbReference>
<dbReference type="GO" id="GO:0008380">
    <property type="term" value="P:RNA splicing"/>
    <property type="evidence" value="ECO:0000314"/>
    <property type="project" value="MGI"/>
</dbReference>
<dbReference type="GO" id="GO:0006364">
    <property type="term" value="P:rRNA processing"/>
    <property type="evidence" value="ECO:0007669"/>
    <property type="project" value="UniProtKB-KW"/>
</dbReference>
<dbReference type="InterPro" id="IPR019007">
    <property type="entry name" value="WW_dom-bd_prot_11"/>
</dbReference>
<dbReference type="PANTHER" id="PTHR13361">
    <property type="entry name" value="WW DOMAIN-BINDING PROTEIN 11"/>
    <property type="match status" value="1"/>
</dbReference>
<dbReference type="PANTHER" id="PTHR13361:SF3">
    <property type="entry name" value="WW DOMAIN-BINDING PROTEIN 11"/>
    <property type="match status" value="1"/>
</dbReference>
<dbReference type="Pfam" id="PF09429">
    <property type="entry name" value="Wbp11"/>
    <property type="match status" value="1"/>
</dbReference>
<name>WBP11_MOUSE</name>